<reference key="1">
    <citation type="journal article" date="2007" name="Science">
        <title>The Fusarium graminearum genome reveals a link between localized polymorphism and pathogen specialization.</title>
        <authorList>
            <person name="Cuomo C.A."/>
            <person name="Gueldener U."/>
            <person name="Xu J.-R."/>
            <person name="Trail F."/>
            <person name="Turgeon B.G."/>
            <person name="Di Pietro A."/>
            <person name="Walton J.D."/>
            <person name="Ma L.-J."/>
            <person name="Baker S.E."/>
            <person name="Rep M."/>
            <person name="Adam G."/>
            <person name="Antoniw J."/>
            <person name="Baldwin T."/>
            <person name="Calvo S.E."/>
            <person name="Chang Y.-L."/>
            <person name="DeCaprio D."/>
            <person name="Gale L.R."/>
            <person name="Gnerre S."/>
            <person name="Goswami R.S."/>
            <person name="Hammond-Kosack K."/>
            <person name="Harris L.J."/>
            <person name="Hilburn K."/>
            <person name="Kennell J.C."/>
            <person name="Kroken S."/>
            <person name="Magnuson J.K."/>
            <person name="Mannhaupt G."/>
            <person name="Mauceli E.W."/>
            <person name="Mewes H.-W."/>
            <person name="Mitterbauer R."/>
            <person name="Muehlbauer G."/>
            <person name="Muensterkoetter M."/>
            <person name="Nelson D."/>
            <person name="O'Donnell K."/>
            <person name="Ouellet T."/>
            <person name="Qi W."/>
            <person name="Quesneville H."/>
            <person name="Roncero M.I.G."/>
            <person name="Seong K.-Y."/>
            <person name="Tetko I.V."/>
            <person name="Urban M."/>
            <person name="Waalwijk C."/>
            <person name="Ward T.J."/>
            <person name="Yao J."/>
            <person name="Birren B.W."/>
            <person name="Kistler H.C."/>
        </authorList>
    </citation>
    <scope>NUCLEOTIDE SEQUENCE [LARGE SCALE GENOMIC DNA]</scope>
    <source>
        <strain>ATCC MYA-4620 / CBS 123657 / FGSC 9075 / NRRL 31084 / PH-1</strain>
    </source>
</reference>
<reference key="2">
    <citation type="journal article" date="2010" name="Nature">
        <title>Comparative genomics reveals mobile pathogenicity chromosomes in Fusarium.</title>
        <authorList>
            <person name="Ma L.-J."/>
            <person name="van der Does H.C."/>
            <person name="Borkovich K.A."/>
            <person name="Coleman J.J."/>
            <person name="Daboussi M.-J."/>
            <person name="Di Pietro A."/>
            <person name="Dufresne M."/>
            <person name="Freitag M."/>
            <person name="Grabherr M."/>
            <person name="Henrissat B."/>
            <person name="Houterman P.M."/>
            <person name="Kang S."/>
            <person name="Shim W.-B."/>
            <person name="Woloshuk C."/>
            <person name="Xie X."/>
            <person name="Xu J.-R."/>
            <person name="Antoniw J."/>
            <person name="Baker S.E."/>
            <person name="Bluhm B.H."/>
            <person name="Breakspear A."/>
            <person name="Brown D.W."/>
            <person name="Butchko R.A.E."/>
            <person name="Chapman S."/>
            <person name="Coulson R."/>
            <person name="Coutinho P.M."/>
            <person name="Danchin E.G.J."/>
            <person name="Diener A."/>
            <person name="Gale L.R."/>
            <person name="Gardiner D.M."/>
            <person name="Goff S."/>
            <person name="Hammond-Kosack K.E."/>
            <person name="Hilburn K."/>
            <person name="Hua-Van A."/>
            <person name="Jonkers W."/>
            <person name="Kazan K."/>
            <person name="Kodira C.D."/>
            <person name="Koehrsen M."/>
            <person name="Kumar L."/>
            <person name="Lee Y.-H."/>
            <person name="Li L."/>
            <person name="Manners J.M."/>
            <person name="Miranda-Saavedra D."/>
            <person name="Mukherjee M."/>
            <person name="Park G."/>
            <person name="Park J."/>
            <person name="Park S.-Y."/>
            <person name="Proctor R.H."/>
            <person name="Regev A."/>
            <person name="Ruiz-Roldan M.C."/>
            <person name="Sain D."/>
            <person name="Sakthikumar S."/>
            <person name="Sykes S."/>
            <person name="Schwartz D.C."/>
            <person name="Turgeon B.G."/>
            <person name="Wapinski I."/>
            <person name="Yoder O."/>
            <person name="Young S."/>
            <person name="Zeng Q."/>
            <person name="Zhou S."/>
            <person name="Galagan J."/>
            <person name="Cuomo C.A."/>
            <person name="Kistler H.C."/>
            <person name="Rep M."/>
        </authorList>
    </citation>
    <scope>GENOME REANNOTATION</scope>
    <source>
        <strain>ATCC MYA-4620 / CBS 123657 / FGSC 9075 / NRRL 31084 / PH-1</strain>
    </source>
</reference>
<reference key="3">
    <citation type="journal article" date="2015" name="BMC Genomics">
        <title>The completed genome sequence of the pathogenic ascomycete fungus Fusarium graminearum.</title>
        <authorList>
            <person name="King R."/>
            <person name="Urban M."/>
            <person name="Hammond-Kosack M.C.U."/>
            <person name="Hassani-Pak K."/>
            <person name="Hammond-Kosack K.E."/>
        </authorList>
    </citation>
    <scope>NUCLEOTIDE SEQUENCE [LARGE SCALE GENOMIC DNA]</scope>
    <source>
        <strain>ATCC MYA-4620 / CBS 123657 / FGSC 9075 / NRRL 31084 / PH-1</strain>
    </source>
</reference>
<evidence type="ECO:0000250" key="1"/>
<evidence type="ECO:0000250" key="2">
    <source>
        <dbReference type="UniProtKB" id="P46995"/>
    </source>
</evidence>
<evidence type="ECO:0000255" key="3"/>
<evidence type="ECO:0000255" key="4">
    <source>
        <dbReference type="PROSITE-ProRule" id="PRU00155"/>
    </source>
</evidence>
<evidence type="ECO:0000255" key="5">
    <source>
        <dbReference type="PROSITE-ProRule" id="PRU00190"/>
    </source>
</evidence>
<evidence type="ECO:0000255" key="6">
    <source>
        <dbReference type="PROSITE-ProRule" id="PRU00224"/>
    </source>
</evidence>
<evidence type="ECO:0000255" key="7">
    <source>
        <dbReference type="PROSITE-ProRule" id="PRU00562"/>
    </source>
</evidence>
<evidence type="ECO:0000255" key="8">
    <source>
        <dbReference type="PROSITE-ProRule" id="PRU00901"/>
    </source>
</evidence>
<evidence type="ECO:0000256" key="9">
    <source>
        <dbReference type="SAM" id="MobiDB-lite"/>
    </source>
</evidence>
<evidence type="ECO:0000305" key="10"/>
<accession>Q4IB50</accession>
<accession>A0A098DW97</accession>
<accession>A0A0E0SI82</accession>
<accession>A0A1C3YJN6</accession>
<accession>I1RNH8</accession>
<gene>
    <name type="primary">SET2</name>
    <name type="ORF">FGRAMPH1_01T18203</name>
    <name type="ORF">FGRRES_16499_M</name>
    <name type="ORF">FGSG_05558</name>
</gene>
<organism>
    <name type="scientific">Gibberella zeae (strain ATCC MYA-4620 / CBS 123657 / FGSC 9075 / NRRL 31084 / PH-1)</name>
    <name type="common">Wheat head blight fungus</name>
    <name type="synonym">Fusarium graminearum</name>
    <dbReference type="NCBI Taxonomy" id="229533"/>
    <lineage>
        <taxon>Eukaryota</taxon>
        <taxon>Fungi</taxon>
        <taxon>Dikarya</taxon>
        <taxon>Ascomycota</taxon>
        <taxon>Pezizomycotina</taxon>
        <taxon>Sordariomycetes</taxon>
        <taxon>Hypocreomycetidae</taxon>
        <taxon>Hypocreales</taxon>
        <taxon>Nectriaceae</taxon>
        <taxon>Fusarium</taxon>
    </lineage>
</organism>
<name>SET2_GIBZE</name>
<feature type="chain" id="PRO_0000269789" description="Histone-lysine N-methyltransferase, H3 lysine-36 specific">
    <location>
        <begin position="1"/>
        <end position="921"/>
    </location>
</feature>
<feature type="domain" description="AWS" evidence="7">
    <location>
        <begin position="120"/>
        <end position="174"/>
    </location>
</feature>
<feature type="domain" description="SET" evidence="5">
    <location>
        <begin position="176"/>
        <end position="293"/>
    </location>
</feature>
<feature type="domain" description="Post-SET" evidence="4">
    <location>
        <begin position="300"/>
        <end position="316"/>
    </location>
</feature>
<feature type="domain" description="WW" evidence="6">
    <location>
        <begin position="564"/>
        <end position="596"/>
    </location>
</feature>
<feature type="region of interest" description="Disordered" evidence="9">
    <location>
        <begin position="1"/>
        <end position="78"/>
    </location>
</feature>
<feature type="region of interest" description="Disordered" evidence="9">
    <location>
        <begin position="346"/>
        <end position="365"/>
    </location>
</feature>
<feature type="region of interest" description="Disordered" evidence="9">
    <location>
        <begin position="503"/>
        <end position="565"/>
    </location>
</feature>
<feature type="region of interest" description="Disordered" evidence="9">
    <location>
        <begin position="624"/>
        <end position="647"/>
    </location>
</feature>
<feature type="region of interest" description="Disordered" evidence="9">
    <location>
        <begin position="741"/>
        <end position="921"/>
    </location>
</feature>
<feature type="coiled-coil region" evidence="3">
    <location>
        <begin position="858"/>
        <end position="894"/>
    </location>
</feature>
<feature type="compositionally biased region" description="Polar residues" evidence="9">
    <location>
        <begin position="24"/>
        <end position="37"/>
    </location>
</feature>
<feature type="compositionally biased region" description="Polar residues" evidence="9">
    <location>
        <begin position="60"/>
        <end position="69"/>
    </location>
</feature>
<feature type="compositionally biased region" description="Basic and acidic residues" evidence="9">
    <location>
        <begin position="508"/>
        <end position="519"/>
    </location>
</feature>
<feature type="compositionally biased region" description="Polar residues" evidence="9">
    <location>
        <begin position="521"/>
        <end position="530"/>
    </location>
</feature>
<feature type="compositionally biased region" description="Polar residues" evidence="9">
    <location>
        <begin position="542"/>
        <end position="555"/>
    </location>
</feature>
<feature type="compositionally biased region" description="Polar residues" evidence="9">
    <location>
        <begin position="624"/>
        <end position="636"/>
    </location>
</feature>
<feature type="compositionally biased region" description="Basic and acidic residues" evidence="9">
    <location>
        <begin position="741"/>
        <end position="758"/>
    </location>
</feature>
<feature type="compositionally biased region" description="Low complexity" evidence="9">
    <location>
        <begin position="761"/>
        <end position="776"/>
    </location>
</feature>
<feature type="compositionally biased region" description="Polar residues" evidence="9">
    <location>
        <begin position="817"/>
        <end position="828"/>
    </location>
</feature>
<feature type="compositionally biased region" description="Pro residues" evidence="9">
    <location>
        <begin position="842"/>
        <end position="853"/>
    </location>
</feature>
<feature type="compositionally biased region" description="Basic and acidic residues" evidence="9">
    <location>
        <begin position="865"/>
        <end position="895"/>
    </location>
</feature>
<feature type="binding site" evidence="5">
    <location>
        <position position="292"/>
    </location>
    <ligand>
        <name>S-adenosyl-L-methionine</name>
        <dbReference type="ChEBI" id="CHEBI:59789"/>
    </ligand>
</feature>
<proteinExistence type="inferred from homology"/>
<comment type="function">
    <text evidence="2">Histone methyltransferase that trimethylates histone H3 'Lys-36' forming H3K36me3. Involved in transcription elongation as well as in transcription repression.</text>
</comment>
<comment type="catalytic activity">
    <reaction evidence="2 8">
        <text>L-lysyl(36)-[histone H3] + 3 S-adenosyl-L-methionine = N(6),N(6),N(6)-trimethyl-L-lysyl(36)-[histone H3] + 3 S-adenosyl-L-homocysteine + 3 H(+)</text>
        <dbReference type="Rhea" id="RHEA:60324"/>
        <dbReference type="Rhea" id="RHEA-COMP:9785"/>
        <dbReference type="Rhea" id="RHEA-COMP:15536"/>
        <dbReference type="ChEBI" id="CHEBI:15378"/>
        <dbReference type="ChEBI" id="CHEBI:29969"/>
        <dbReference type="ChEBI" id="CHEBI:57856"/>
        <dbReference type="ChEBI" id="CHEBI:59789"/>
        <dbReference type="ChEBI" id="CHEBI:61961"/>
        <dbReference type="EC" id="2.1.1.359"/>
    </reaction>
</comment>
<comment type="subcellular location">
    <subcellularLocation>
        <location evidence="1">Nucleus</location>
    </subcellularLocation>
    <subcellularLocation>
        <location evidence="1">Chromosome</location>
    </subcellularLocation>
</comment>
<comment type="domain">
    <text evidence="1">The AWS and SET domains are necessary for transcription repression.</text>
</comment>
<comment type="similarity">
    <text evidence="8">Belongs to the class V-like SAM-binding methyltransferase superfamily. Histone-lysine methyltransferase family. SET2 subfamily.</text>
</comment>
<comment type="sequence caution" evidence="10">
    <conflict type="erroneous gene model prediction">
        <sequence resource="EMBL-CDS" id="ESU11532"/>
    </conflict>
</comment>
<keyword id="KW-0158">Chromosome</keyword>
<keyword id="KW-0175">Coiled coil</keyword>
<keyword id="KW-0489">Methyltransferase</keyword>
<keyword id="KW-0539">Nucleus</keyword>
<keyword id="KW-1185">Reference proteome</keyword>
<keyword id="KW-0678">Repressor</keyword>
<keyword id="KW-0949">S-adenosyl-L-methionine</keyword>
<keyword id="KW-0804">Transcription</keyword>
<keyword id="KW-0805">Transcription regulation</keyword>
<keyword id="KW-0808">Transferase</keyword>
<protein>
    <recommendedName>
        <fullName>Histone-lysine N-methyltransferase, H3 lysine-36 specific</fullName>
        <ecNumber evidence="2">2.1.1.359</ecNumber>
    </recommendedName>
    <alternativeName>
        <fullName>SET domain-containing protein 2</fullName>
    </alternativeName>
</protein>
<dbReference type="EC" id="2.1.1.359" evidence="2"/>
<dbReference type="EMBL" id="DS231665">
    <property type="protein sequence ID" value="ESU11532.1"/>
    <property type="status" value="ALT_SEQ"/>
    <property type="molecule type" value="Genomic_DNA"/>
</dbReference>
<dbReference type="EMBL" id="HG970334">
    <property type="protein sequence ID" value="SCB64774.1"/>
    <property type="molecule type" value="Genomic_DNA"/>
</dbReference>
<dbReference type="RefSeq" id="XP_011324108.1">
    <property type="nucleotide sequence ID" value="XM_011325806.1"/>
</dbReference>
<dbReference type="SMR" id="Q4IB50"/>
<dbReference type="FunCoup" id="Q4IB50">
    <property type="interactions" value="101"/>
</dbReference>
<dbReference type="STRING" id="229533.Q4IB50"/>
<dbReference type="GeneID" id="23552737"/>
<dbReference type="KEGG" id="fgr:FGSG_05558"/>
<dbReference type="VEuPathDB" id="FungiDB:FGRAMPH1_01G18203"/>
<dbReference type="eggNOG" id="KOG4442">
    <property type="taxonomic scope" value="Eukaryota"/>
</dbReference>
<dbReference type="HOGENOM" id="CLU_008492_0_0_1"/>
<dbReference type="InParanoid" id="Q4IB50"/>
<dbReference type="OrthoDB" id="79512at110618"/>
<dbReference type="Proteomes" id="UP000070720">
    <property type="component" value="Chromosome 3"/>
</dbReference>
<dbReference type="GO" id="GO:0005694">
    <property type="term" value="C:chromosome"/>
    <property type="evidence" value="ECO:0007669"/>
    <property type="project" value="UniProtKB-SubCell"/>
</dbReference>
<dbReference type="GO" id="GO:0005634">
    <property type="term" value="C:nucleus"/>
    <property type="evidence" value="ECO:0007669"/>
    <property type="project" value="UniProtKB-SubCell"/>
</dbReference>
<dbReference type="GO" id="GO:0140955">
    <property type="term" value="F:histone H3K36 trimethyltransferase activity"/>
    <property type="evidence" value="ECO:0007669"/>
    <property type="project" value="UniProtKB-EC"/>
</dbReference>
<dbReference type="GO" id="GO:0032259">
    <property type="term" value="P:methylation"/>
    <property type="evidence" value="ECO:0007669"/>
    <property type="project" value="UniProtKB-KW"/>
</dbReference>
<dbReference type="GO" id="GO:0006355">
    <property type="term" value="P:regulation of DNA-templated transcription"/>
    <property type="evidence" value="ECO:0007669"/>
    <property type="project" value="InterPro"/>
</dbReference>
<dbReference type="CDD" id="cd19172">
    <property type="entry name" value="SET_SETD2"/>
    <property type="match status" value="1"/>
</dbReference>
<dbReference type="CDD" id="cd00201">
    <property type="entry name" value="WW"/>
    <property type="match status" value="1"/>
</dbReference>
<dbReference type="FunFam" id="1.10.1740.100:FF:000002">
    <property type="entry name" value="Histone-lysine N-methyltransferase"/>
    <property type="match status" value="1"/>
</dbReference>
<dbReference type="FunFam" id="2.170.270.10:FF:000033">
    <property type="entry name" value="Histone-lysine N-methyltransferase"/>
    <property type="match status" value="1"/>
</dbReference>
<dbReference type="Gene3D" id="2.20.70.10">
    <property type="match status" value="1"/>
</dbReference>
<dbReference type="Gene3D" id="2.170.270.10">
    <property type="entry name" value="SET domain"/>
    <property type="match status" value="1"/>
</dbReference>
<dbReference type="Gene3D" id="1.10.1740.100">
    <property type="entry name" value="Set2, Rpb1 interacting domain"/>
    <property type="match status" value="1"/>
</dbReference>
<dbReference type="InterPro" id="IPR006560">
    <property type="entry name" value="AWS_dom"/>
</dbReference>
<dbReference type="InterPro" id="IPR003616">
    <property type="entry name" value="Post-SET_dom"/>
</dbReference>
<dbReference type="InterPro" id="IPR025788">
    <property type="entry name" value="Set2_fungi"/>
</dbReference>
<dbReference type="InterPro" id="IPR050777">
    <property type="entry name" value="SET2_Histone-Lys_MeTrsfase"/>
</dbReference>
<dbReference type="InterPro" id="IPR001214">
    <property type="entry name" value="SET_dom"/>
</dbReference>
<dbReference type="InterPro" id="IPR046341">
    <property type="entry name" value="SET_dom_sf"/>
</dbReference>
<dbReference type="InterPro" id="IPR044437">
    <property type="entry name" value="SETD2/Set2_SET"/>
</dbReference>
<dbReference type="InterPro" id="IPR013257">
    <property type="entry name" value="SRI"/>
</dbReference>
<dbReference type="InterPro" id="IPR038190">
    <property type="entry name" value="SRI_sf"/>
</dbReference>
<dbReference type="InterPro" id="IPR035441">
    <property type="entry name" value="TFIIS/LEDGF_dom_sf"/>
</dbReference>
<dbReference type="InterPro" id="IPR017923">
    <property type="entry name" value="TFIIS_N"/>
</dbReference>
<dbReference type="InterPro" id="IPR001202">
    <property type="entry name" value="WW_dom"/>
</dbReference>
<dbReference type="InterPro" id="IPR036020">
    <property type="entry name" value="WW_dom_sf"/>
</dbReference>
<dbReference type="PANTHER" id="PTHR22884">
    <property type="entry name" value="SET DOMAIN PROTEINS"/>
    <property type="match status" value="1"/>
</dbReference>
<dbReference type="Pfam" id="PF17907">
    <property type="entry name" value="AWS"/>
    <property type="match status" value="1"/>
</dbReference>
<dbReference type="Pfam" id="PF08711">
    <property type="entry name" value="Med26"/>
    <property type="match status" value="1"/>
</dbReference>
<dbReference type="Pfam" id="PF00856">
    <property type="entry name" value="SET"/>
    <property type="match status" value="1"/>
</dbReference>
<dbReference type="Pfam" id="PF08236">
    <property type="entry name" value="SRI"/>
    <property type="match status" value="1"/>
</dbReference>
<dbReference type="SMART" id="SM00570">
    <property type="entry name" value="AWS"/>
    <property type="match status" value="1"/>
</dbReference>
<dbReference type="SMART" id="SM00508">
    <property type="entry name" value="PostSET"/>
    <property type="match status" value="1"/>
</dbReference>
<dbReference type="SMART" id="SM00317">
    <property type="entry name" value="SET"/>
    <property type="match status" value="1"/>
</dbReference>
<dbReference type="SMART" id="SM00456">
    <property type="entry name" value="WW"/>
    <property type="match status" value="1"/>
</dbReference>
<dbReference type="SUPFAM" id="SSF47676">
    <property type="entry name" value="Conserved domain common to transcription factors TFIIS, elongin A, CRSP70"/>
    <property type="match status" value="1"/>
</dbReference>
<dbReference type="SUPFAM" id="SSF82199">
    <property type="entry name" value="SET domain"/>
    <property type="match status" value="1"/>
</dbReference>
<dbReference type="SUPFAM" id="SSF51045">
    <property type="entry name" value="WW domain"/>
    <property type="match status" value="1"/>
</dbReference>
<dbReference type="PROSITE" id="PS51215">
    <property type="entry name" value="AWS"/>
    <property type="match status" value="1"/>
</dbReference>
<dbReference type="PROSITE" id="PS50868">
    <property type="entry name" value="POST_SET"/>
    <property type="match status" value="1"/>
</dbReference>
<dbReference type="PROSITE" id="PS51568">
    <property type="entry name" value="SAM_MT43_SET2_1"/>
    <property type="match status" value="1"/>
</dbReference>
<dbReference type="PROSITE" id="PS50280">
    <property type="entry name" value="SET"/>
    <property type="match status" value="1"/>
</dbReference>
<dbReference type="PROSITE" id="PS01159">
    <property type="entry name" value="WW_DOMAIN_1"/>
    <property type="match status" value="1"/>
</dbReference>
<dbReference type="PROSITE" id="PS50020">
    <property type="entry name" value="WW_DOMAIN_2"/>
    <property type="match status" value="1"/>
</dbReference>
<sequence>MEDDEYTTSKMEEIKLEEGANDAQVKQETNTPMSITNGDHESSRSPTASQDGLKSRSESADTPSSNRPSKLSRKASQKLAASREPVLFDHLPDMTTESCKFFQRIPDCLYGSKHLGSTDNDALDCECRDEWHDGKNLACGEDSDCINRATKMECSAEGGNCAGGCQNQRFQRKQYANVSVIKTEKKGFGLRADSDLQPNDFVFEYIGEVINEPTFRRRMIQYDEEGIKHFYFMSLNKSEFVDATKKGNYGRFCNHSCNPNCYVDKWVVGDKLRMGIFTSRKIQSGEELVFNYNVDRYGADPQPCYCGEPNCVGFIGGKTQTERATKLPAATVEALGIDGGDGWDTSVAKKPRKKKPDEDDEEYVNSIRPRSLSEDDARKVMAALMQCKEKWIAVKLLDRIMQCDEERVIHCVMRMHAYQILKTTLNTFIDDHNVVLQVLDILDKFPRLTRNKVQDSKIEATIEGLTQSEHEDVASKSKHLLNEWSKLEVAYRIRRRKFDPNAPAANSFEERRGAGREEETVQSTSKTASPTPIDAPKGPRNSMPQRNNAFFQNGGRSRRPPFNASLPQGWFTAKDAAGNTYFYTKQGATTWQRPTQPATEPAAKAPSKAMKEQLAIQSIINQVTEKGTPKHTSVSTPKAAETPPKEVKEEKWRSLPVDKRMKIYENTLFPHIKHVLDKFHHKLPKEELKRFGKDIAKKLVASDFKNNRVEDPGAPLSDKQVKKIKQYVKDFLDRAVKKYGEHKRKADEDADTQMKDDQGPSAAGSGAGSVVDGSDGTALAKVDGTSMGEVDVTAVSDREGTGSLGSPDRKRKRDLDTSGSPYVTSTDGPNMKRLREDELEAPSPPPPPPPPPQSDMDEVVTAEQEALREQEEALMRENEEAQRLEDEASHTKGLEDVLDASNEISRLNKEARKPGSQKMPA</sequence>